<organism>
    <name type="scientific">Streptococcus pneumoniae (strain Hungary19A-6)</name>
    <dbReference type="NCBI Taxonomy" id="487214"/>
    <lineage>
        <taxon>Bacteria</taxon>
        <taxon>Bacillati</taxon>
        <taxon>Bacillota</taxon>
        <taxon>Bacilli</taxon>
        <taxon>Lactobacillales</taxon>
        <taxon>Streptococcaceae</taxon>
        <taxon>Streptococcus</taxon>
    </lineage>
</organism>
<accession>B1ICN7</accession>
<proteinExistence type="inferred from homology"/>
<reference key="1">
    <citation type="journal article" date="2010" name="Genome Biol.">
        <title>Structure and dynamics of the pan-genome of Streptococcus pneumoniae and closely related species.</title>
        <authorList>
            <person name="Donati C."/>
            <person name="Hiller N.L."/>
            <person name="Tettelin H."/>
            <person name="Muzzi A."/>
            <person name="Croucher N.J."/>
            <person name="Angiuoli S.V."/>
            <person name="Oggioni M."/>
            <person name="Dunning Hotopp J.C."/>
            <person name="Hu F.Z."/>
            <person name="Riley D.R."/>
            <person name="Covacci A."/>
            <person name="Mitchell T.J."/>
            <person name="Bentley S.D."/>
            <person name="Kilian M."/>
            <person name="Ehrlich G.D."/>
            <person name="Rappuoli R."/>
            <person name="Moxon E.R."/>
            <person name="Masignani V."/>
        </authorList>
    </citation>
    <scope>NUCLEOTIDE SEQUENCE [LARGE SCALE GENOMIC DNA]</scope>
    <source>
        <strain>Hungary19A-6</strain>
    </source>
</reference>
<name>DEF_STRPI</name>
<feature type="chain" id="PRO_1000097349" description="Peptide deformylase">
    <location>
        <begin position="1"/>
        <end position="203"/>
    </location>
</feature>
<feature type="active site" evidence="1">
    <location>
        <position position="174"/>
    </location>
</feature>
<feature type="binding site" evidence="1">
    <location>
        <position position="130"/>
    </location>
    <ligand>
        <name>Fe cation</name>
        <dbReference type="ChEBI" id="CHEBI:24875"/>
    </ligand>
</feature>
<feature type="binding site" evidence="1">
    <location>
        <position position="173"/>
    </location>
    <ligand>
        <name>Fe cation</name>
        <dbReference type="ChEBI" id="CHEBI:24875"/>
    </ligand>
</feature>
<feature type="binding site" evidence="1">
    <location>
        <position position="177"/>
    </location>
    <ligand>
        <name>Fe cation</name>
        <dbReference type="ChEBI" id="CHEBI:24875"/>
    </ligand>
</feature>
<evidence type="ECO:0000255" key="1">
    <source>
        <dbReference type="HAMAP-Rule" id="MF_00163"/>
    </source>
</evidence>
<comment type="function">
    <text evidence="1">Removes the formyl group from the N-terminal Met of newly synthesized proteins. Requires at least a dipeptide for an efficient rate of reaction. N-terminal L-methionine is a prerequisite for activity but the enzyme has broad specificity at other positions.</text>
</comment>
<comment type="catalytic activity">
    <reaction evidence="1">
        <text>N-terminal N-formyl-L-methionyl-[peptide] + H2O = N-terminal L-methionyl-[peptide] + formate</text>
        <dbReference type="Rhea" id="RHEA:24420"/>
        <dbReference type="Rhea" id="RHEA-COMP:10639"/>
        <dbReference type="Rhea" id="RHEA-COMP:10640"/>
        <dbReference type="ChEBI" id="CHEBI:15377"/>
        <dbReference type="ChEBI" id="CHEBI:15740"/>
        <dbReference type="ChEBI" id="CHEBI:49298"/>
        <dbReference type="ChEBI" id="CHEBI:64731"/>
        <dbReference type="EC" id="3.5.1.88"/>
    </reaction>
</comment>
<comment type="cofactor">
    <cofactor evidence="1">
        <name>Fe(2+)</name>
        <dbReference type="ChEBI" id="CHEBI:29033"/>
    </cofactor>
    <text evidence="1">Binds 1 Fe(2+) ion.</text>
</comment>
<comment type="similarity">
    <text evidence="1">Belongs to the polypeptide deformylase family.</text>
</comment>
<keyword id="KW-0378">Hydrolase</keyword>
<keyword id="KW-0408">Iron</keyword>
<keyword id="KW-0479">Metal-binding</keyword>
<keyword id="KW-0648">Protein biosynthesis</keyword>
<sequence length="203" mass="22692">MSAIERITKAAHLIDMNDIIREGNPTLRTVAEEVTFPLSDQEIILGEKMMQFLKHSQDPVMAEKMGLRGGVGLAAPQLDISKRIIAVLVPNIVEEGETPQEAYDLEAIMYNPKIVSHSVQDAALGEGEGCLSVDRNVPGYVVRHARVTVDYFDKDGEKHRIKLKGYNSIVVQHEIDHINGIMFYDRINEKDPFAVKDGLLILE</sequence>
<gene>
    <name evidence="1" type="primary">def</name>
    <name type="ordered locus">SPH_1572</name>
</gene>
<dbReference type="EC" id="3.5.1.88" evidence="1"/>
<dbReference type="EMBL" id="CP000936">
    <property type="protein sequence ID" value="ACA36496.1"/>
    <property type="molecule type" value="Genomic_DNA"/>
</dbReference>
<dbReference type="RefSeq" id="WP_001272961.1">
    <property type="nucleotide sequence ID" value="NC_010380.1"/>
</dbReference>
<dbReference type="SMR" id="B1ICN7"/>
<dbReference type="GeneID" id="45218269"/>
<dbReference type="KEGG" id="spv:SPH_1572"/>
<dbReference type="HOGENOM" id="CLU_061901_4_0_9"/>
<dbReference type="Proteomes" id="UP000002163">
    <property type="component" value="Chromosome"/>
</dbReference>
<dbReference type="GO" id="GO:0046872">
    <property type="term" value="F:metal ion binding"/>
    <property type="evidence" value="ECO:0007669"/>
    <property type="project" value="UniProtKB-KW"/>
</dbReference>
<dbReference type="GO" id="GO:0042586">
    <property type="term" value="F:peptide deformylase activity"/>
    <property type="evidence" value="ECO:0007669"/>
    <property type="project" value="UniProtKB-UniRule"/>
</dbReference>
<dbReference type="GO" id="GO:0043686">
    <property type="term" value="P:co-translational protein modification"/>
    <property type="evidence" value="ECO:0007669"/>
    <property type="project" value="TreeGrafter"/>
</dbReference>
<dbReference type="GO" id="GO:0006412">
    <property type="term" value="P:translation"/>
    <property type="evidence" value="ECO:0007669"/>
    <property type="project" value="UniProtKB-UniRule"/>
</dbReference>
<dbReference type="CDD" id="cd00487">
    <property type="entry name" value="Pep_deformylase"/>
    <property type="match status" value="1"/>
</dbReference>
<dbReference type="FunFam" id="3.90.45.10:FF:000002">
    <property type="entry name" value="Peptide deformylase"/>
    <property type="match status" value="1"/>
</dbReference>
<dbReference type="Gene3D" id="3.90.45.10">
    <property type="entry name" value="Peptide deformylase"/>
    <property type="match status" value="1"/>
</dbReference>
<dbReference type="HAMAP" id="MF_00163">
    <property type="entry name" value="Pep_deformylase"/>
    <property type="match status" value="1"/>
</dbReference>
<dbReference type="InterPro" id="IPR023635">
    <property type="entry name" value="Peptide_deformylase"/>
</dbReference>
<dbReference type="InterPro" id="IPR036821">
    <property type="entry name" value="Peptide_deformylase_sf"/>
</dbReference>
<dbReference type="NCBIfam" id="TIGR00079">
    <property type="entry name" value="pept_deformyl"/>
    <property type="match status" value="1"/>
</dbReference>
<dbReference type="PANTHER" id="PTHR10458">
    <property type="entry name" value="PEPTIDE DEFORMYLASE"/>
    <property type="match status" value="1"/>
</dbReference>
<dbReference type="PANTHER" id="PTHR10458:SF8">
    <property type="entry name" value="PEPTIDE DEFORMYLASE 2"/>
    <property type="match status" value="1"/>
</dbReference>
<dbReference type="Pfam" id="PF01327">
    <property type="entry name" value="Pep_deformylase"/>
    <property type="match status" value="1"/>
</dbReference>
<dbReference type="PIRSF" id="PIRSF004749">
    <property type="entry name" value="Pep_def"/>
    <property type="match status" value="1"/>
</dbReference>
<dbReference type="PRINTS" id="PR01576">
    <property type="entry name" value="PDEFORMYLASE"/>
</dbReference>
<dbReference type="SUPFAM" id="SSF56420">
    <property type="entry name" value="Peptide deformylase"/>
    <property type="match status" value="1"/>
</dbReference>
<protein>
    <recommendedName>
        <fullName evidence="1">Peptide deformylase</fullName>
        <shortName evidence="1">PDF</shortName>
        <ecNumber evidence="1">3.5.1.88</ecNumber>
    </recommendedName>
    <alternativeName>
        <fullName evidence="1">Polypeptide deformylase</fullName>
    </alternativeName>
</protein>